<keyword id="KW-0009">Actin-binding</keyword>
<keyword id="KW-0963">Cytoplasm</keyword>
<keyword id="KW-0206">Cytoskeleton</keyword>
<keyword id="KW-0597">Phosphoprotein</keyword>
<keyword id="KW-1185">Reference proteome</keyword>
<reference key="1">
    <citation type="journal article" date="1999" name="Nature">
        <title>Sequence and analysis of chromosome 4 of the plant Arabidopsis thaliana.</title>
        <authorList>
            <person name="Mayer K.F.X."/>
            <person name="Schueller C."/>
            <person name="Wambutt R."/>
            <person name="Murphy G."/>
            <person name="Volckaert G."/>
            <person name="Pohl T."/>
            <person name="Duesterhoeft A."/>
            <person name="Stiekema W."/>
            <person name="Entian K.-D."/>
            <person name="Terryn N."/>
            <person name="Harris B."/>
            <person name="Ansorge W."/>
            <person name="Brandt P."/>
            <person name="Grivell L.A."/>
            <person name="Rieger M."/>
            <person name="Weichselgartner M."/>
            <person name="de Simone V."/>
            <person name="Obermaier B."/>
            <person name="Mache R."/>
            <person name="Mueller M."/>
            <person name="Kreis M."/>
            <person name="Delseny M."/>
            <person name="Puigdomenech P."/>
            <person name="Watson M."/>
            <person name="Schmidtheini T."/>
            <person name="Reichert B."/>
            <person name="Portetelle D."/>
            <person name="Perez-Alonso M."/>
            <person name="Boutry M."/>
            <person name="Bancroft I."/>
            <person name="Vos P."/>
            <person name="Hoheisel J."/>
            <person name="Zimmermann W."/>
            <person name="Wedler H."/>
            <person name="Ridley P."/>
            <person name="Langham S.-A."/>
            <person name="McCullagh B."/>
            <person name="Bilham L."/>
            <person name="Robben J."/>
            <person name="van der Schueren J."/>
            <person name="Grymonprez B."/>
            <person name="Chuang Y.-J."/>
            <person name="Vandenbussche F."/>
            <person name="Braeken M."/>
            <person name="Weltjens I."/>
            <person name="Voet M."/>
            <person name="Bastiaens I."/>
            <person name="Aert R."/>
            <person name="Defoor E."/>
            <person name="Weitzenegger T."/>
            <person name="Bothe G."/>
            <person name="Ramsperger U."/>
            <person name="Hilbert H."/>
            <person name="Braun M."/>
            <person name="Holzer E."/>
            <person name="Brandt A."/>
            <person name="Peters S."/>
            <person name="van Staveren M."/>
            <person name="Dirkse W."/>
            <person name="Mooijman P."/>
            <person name="Klein Lankhorst R."/>
            <person name="Rose M."/>
            <person name="Hauf J."/>
            <person name="Koetter P."/>
            <person name="Berneiser S."/>
            <person name="Hempel S."/>
            <person name="Feldpausch M."/>
            <person name="Lamberth S."/>
            <person name="Van den Daele H."/>
            <person name="De Keyser A."/>
            <person name="Buysshaert C."/>
            <person name="Gielen J."/>
            <person name="Villarroel R."/>
            <person name="De Clercq R."/>
            <person name="van Montagu M."/>
            <person name="Rogers J."/>
            <person name="Cronin A."/>
            <person name="Quail M.A."/>
            <person name="Bray-Allen S."/>
            <person name="Clark L."/>
            <person name="Doggett J."/>
            <person name="Hall S."/>
            <person name="Kay M."/>
            <person name="Lennard N."/>
            <person name="McLay K."/>
            <person name="Mayes R."/>
            <person name="Pettett A."/>
            <person name="Rajandream M.A."/>
            <person name="Lyne M."/>
            <person name="Benes V."/>
            <person name="Rechmann S."/>
            <person name="Borkova D."/>
            <person name="Bloecker H."/>
            <person name="Scharfe M."/>
            <person name="Grimm M."/>
            <person name="Loehnert T.-H."/>
            <person name="Dose S."/>
            <person name="de Haan M."/>
            <person name="Maarse A.C."/>
            <person name="Schaefer M."/>
            <person name="Mueller-Auer S."/>
            <person name="Gabel C."/>
            <person name="Fuchs M."/>
            <person name="Fartmann B."/>
            <person name="Granderath K."/>
            <person name="Dauner D."/>
            <person name="Herzl A."/>
            <person name="Neumann S."/>
            <person name="Argiriou A."/>
            <person name="Vitale D."/>
            <person name="Liguori R."/>
            <person name="Piravandi E."/>
            <person name="Massenet O."/>
            <person name="Quigley F."/>
            <person name="Clabauld G."/>
            <person name="Muendlein A."/>
            <person name="Felber R."/>
            <person name="Schnabl S."/>
            <person name="Hiller R."/>
            <person name="Schmidt W."/>
            <person name="Lecharny A."/>
            <person name="Aubourg S."/>
            <person name="Chefdor F."/>
            <person name="Cooke R."/>
            <person name="Berger C."/>
            <person name="Monfort A."/>
            <person name="Casacuberta E."/>
            <person name="Gibbons T."/>
            <person name="Weber N."/>
            <person name="Vandenbol M."/>
            <person name="Bargues M."/>
            <person name="Terol J."/>
            <person name="Torres A."/>
            <person name="Perez-Perez A."/>
            <person name="Purnelle B."/>
            <person name="Bent E."/>
            <person name="Johnson S."/>
            <person name="Tacon D."/>
            <person name="Jesse T."/>
            <person name="Heijnen L."/>
            <person name="Schwarz S."/>
            <person name="Scholler P."/>
            <person name="Heber S."/>
            <person name="Francs P."/>
            <person name="Bielke C."/>
            <person name="Frishman D."/>
            <person name="Haase D."/>
            <person name="Lemcke K."/>
            <person name="Mewes H.-W."/>
            <person name="Stocker S."/>
            <person name="Zaccaria P."/>
            <person name="Bevan M."/>
            <person name="Wilson R.K."/>
            <person name="de la Bastide M."/>
            <person name="Habermann K."/>
            <person name="Parnell L."/>
            <person name="Dedhia N."/>
            <person name="Gnoj L."/>
            <person name="Schutz K."/>
            <person name="Huang E."/>
            <person name="Spiegel L."/>
            <person name="Sekhon M."/>
            <person name="Murray J."/>
            <person name="Sheet P."/>
            <person name="Cordes M."/>
            <person name="Abu-Threideh J."/>
            <person name="Stoneking T."/>
            <person name="Kalicki J."/>
            <person name="Graves T."/>
            <person name="Harmon G."/>
            <person name="Edwards J."/>
            <person name="Latreille P."/>
            <person name="Courtney L."/>
            <person name="Cloud J."/>
            <person name="Abbott A."/>
            <person name="Scott K."/>
            <person name="Johnson D."/>
            <person name="Minx P."/>
            <person name="Bentley D."/>
            <person name="Fulton B."/>
            <person name="Miller N."/>
            <person name="Greco T."/>
            <person name="Kemp K."/>
            <person name="Kramer J."/>
            <person name="Fulton L."/>
            <person name="Mardis E."/>
            <person name="Dante M."/>
            <person name="Pepin K."/>
            <person name="Hillier L.W."/>
            <person name="Nelson J."/>
            <person name="Spieth J."/>
            <person name="Ryan E."/>
            <person name="Andrews S."/>
            <person name="Geisel C."/>
            <person name="Layman D."/>
            <person name="Du H."/>
            <person name="Ali J."/>
            <person name="Berghoff A."/>
            <person name="Jones K."/>
            <person name="Drone K."/>
            <person name="Cotton M."/>
            <person name="Joshu C."/>
            <person name="Antonoiu B."/>
            <person name="Zidanic M."/>
            <person name="Strong C."/>
            <person name="Sun H."/>
            <person name="Lamar B."/>
            <person name="Yordan C."/>
            <person name="Ma P."/>
            <person name="Zhong J."/>
            <person name="Preston R."/>
            <person name="Vil D."/>
            <person name="Shekher M."/>
            <person name="Matero A."/>
            <person name="Shah R."/>
            <person name="Swaby I.K."/>
            <person name="O'Shaughnessy A."/>
            <person name="Rodriguez M."/>
            <person name="Hoffman J."/>
            <person name="Till S."/>
            <person name="Granat S."/>
            <person name="Shohdy N."/>
            <person name="Hasegawa A."/>
            <person name="Hameed A."/>
            <person name="Lodhi M."/>
            <person name="Johnson A."/>
            <person name="Chen E."/>
            <person name="Marra M.A."/>
            <person name="Martienssen R."/>
            <person name="McCombie W.R."/>
        </authorList>
    </citation>
    <scope>NUCLEOTIDE SEQUENCE [LARGE SCALE GENOMIC DNA]</scope>
    <source>
        <strain>cv. Columbia</strain>
    </source>
</reference>
<reference key="2">
    <citation type="journal article" date="2017" name="Plant J.">
        <title>Araport11: a complete reannotation of the Arabidopsis thaliana reference genome.</title>
        <authorList>
            <person name="Cheng C.Y."/>
            <person name="Krishnakumar V."/>
            <person name="Chan A.P."/>
            <person name="Thibaud-Nissen F."/>
            <person name="Schobel S."/>
            <person name="Town C.D."/>
        </authorList>
    </citation>
    <scope>GENOME REANNOTATION</scope>
    <source>
        <strain>cv. Columbia</strain>
    </source>
</reference>
<reference key="3">
    <citation type="submission" date="2002-03" db="EMBL/GenBank/DDBJ databases">
        <title>Full-length cDNA from Arabidopsis thaliana.</title>
        <authorList>
            <person name="Brover V.V."/>
            <person name="Troukhan M.E."/>
            <person name="Alexandrov N.A."/>
            <person name="Lu Y.-P."/>
            <person name="Flavell R.B."/>
            <person name="Feldmann K.A."/>
        </authorList>
    </citation>
    <scope>NUCLEOTIDE SEQUENCE [LARGE SCALE MRNA]</scope>
</reference>
<reference key="4">
    <citation type="submission" date="2006-03" db="EMBL/GenBank/DDBJ databases">
        <title>Arabidopsis ORF clones.</title>
        <authorList>
            <person name="Kim C.J."/>
            <person name="Chen H."/>
            <person name="Shinn P."/>
            <person name="Ecker J.R."/>
        </authorList>
    </citation>
    <scope>NUCLEOTIDE SEQUENCE [LARGE SCALE MRNA]</scope>
    <source>
        <strain>cv. Columbia</strain>
    </source>
</reference>
<reference key="5">
    <citation type="submission" date="2005-03" db="EMBL/GenBank/DDBJ databases">
        <title>Large-scale analysis of RIKEN Arabidopsis full-length (RAFL) cDNAs.</title>
        <authorList>
            <person name="Totoki Y."/>
            <person name="Seki M."/>
            <person name="Ishida J."/>
            <person name="Nakajima M."/>
            <person name="Enju A."/>
            <person name="Kamiya A."/>
            <person name="Narusaka M."/>
            <person name="Shin-i T."/>
            <person name="Nakagawa M."/>
            <person name="Sakamoto N."/>
            <person name="Oishi K."/>
            <person name="Kohara Y."/>
            <person name="Kobayashi M."/>
            <person name="Toyoda A."/>
            <person name="Sakaki Y."/>
            <person name="Sakurai T."/>
            <person name="Iida K."/>
            <person name="Akiyama K."/>
            <person name="Satou M."/>
            <person name="Toyoda T."/>
            <person name="Konagaya A."/>
            <person name="Carninci P."/>
            <person name="Kawai J."/>
            <person name="Hayashizaki Y."/>
            <person name="Shinozaki K."/>
        </authorList>
    </citation>
    <scope>NUCLEOTIDE SEQUENCE [LARGE SCALE MRNA] OF 78-140</scope>
    <source>
        <strain>cv. Columbia</strain>
    </source>
</reference>
<reference key="6">
    <citation type="journal article" date="2006" name="J. Plant Physiol.">
        <title>Comparative study of rice and Arabidopsis actin-depolymerizing factors gene families.</title>
        <authorList>
            <person name="Feng Y."/>
            <person name="Liu Q."/>
            <person name="Xue Q."/>
        </authorList>
    </citation>
    <scope>GENE FAMILY</scope>
</reference>
<reference key="7">
    <citation type="journal article" date="2007" name="Plant Cell">
        <title>Class-specific interaction of profilin and ADF isovariants with actin in the regulation of plant development.</title>
        <authorList>
            <person name="Kandasamy M.K."/>
            <person name="Burgos-Rivera B."/>
            <person name="McKinney E.C."/>
            <person name="Ruzicka D.R."/>
            <person name="Meagher R.B."/>
        </authorList>
    </citation>
    <scope>TISSUE SPECIFICITY</scope>
</reference>
<evidence type="ECO:0000250" key="1">
    <source>
        <dbReference type="UniProtKB" id="Q39250"/>
    </source>
</evidence>
<evidence type="ECO:0000250" key="2">
    <source>
        <dbReference type="UniProtKB" id="Q39251"/>
    </source>
</evidence>
<evidence type="ECO:0000250" key="3">
    <source>
        <dbReference type="UniProtKB" id="Q9ZSK3"/>
    </source>
</evidence>
<evidence type="ECO:0000255" key="4">
    <source>
        <dbReference type="PROSITE-ProRule" id="PRU00599"/>
    </source>
</evidence>
<evidence type="ECO:0000269" key="5">
    <source>
    </source>
</evidence>
<evidence type="ECO:0000305" key="6"/>
<dbReference type="EMBL" id="AF058919">
    <property type="protein sequence ID" value="AAC13618.1"/>
    <property type="status" value="ALT_SEQ"/>
    <property type="molecule type" value="Genomic_DNA"/>
</dbReference>
<dbReference type="EMBL" id="AL161472">
    <property type="protein sequence ID" value="CAB80877.1"/>
    <property type="status" value="ALT_SEQ"/>
    <property type="molecule type" value="Genomic_DNA"/>
</dbReference>
<dbReference type="EMBL" id="CP002687">
    <property type="protein sequence ID" value="AEE81918.1"/>
    <property type="molecule type" value="Genomic_DNA"/>
</dbReference>
<dbReference type="EMBL" id="AY086598">
    <property type="protein sequence ID" value="AAM63658.1"/>
    <property type="molecule type" value="mRNA"/>
</dbReference>
<dbReference type="EMBL" id="BT024819">
    <property type="protein sequence ID" value="ABD60702.1"/>
    <property type="molecule type" value="mRNA"/>
</dbReference>
<dbReference type="EMBL" id="AK220571">
    <property type="protein sequence ID" value="BAD94827.1"/>
    <property type="status" value="ALT_INIT"/>
    <property type="molecule type" value="mRNA"/>
</dbReference>
<dbReference type="PIR" id="T01232">
    <property type="entry name" value="T01232"/>
</dbReference>
<dbReference type="RefSeq" id="NP_567182.1">
    <property type="nucleotide sequence ID" value="NM_116293.3"/>
</dbReference>
<dbReference type="SMR" id="Q570Y6"/>
<dbReference type="FunCoup" id="Q570Y6">
    <property type="interactions" value="2539"/>
</dbReference>
<dbReference type="STRING" id="3702.Q570Y6"/>
<dbReference type="PaxDb" id="3702-AT4G00680.1"/>
<dbReference type="ProteomicsDB" id="244796"/>
<dbReference type="EnsemblPlants" id="AT4G00680.1">
    <property type="protein sequence ID" value="AT4G00680.1"/>
    <property type="gene ID" value="AT4G00680"/>
</dbReference>
<dbReference type="GeneID" id="828037"/>
<dbReference type="Gramene" id="AT4G00680.1">
    <property type="protein sequence ID" value="AT4G00680.1"/>
    <property type="gene ID" value="AT4G00680"/>
</dbReference>
<dbReference type="KEGG" id="ath:AT4G00680"/>
<dbReference type="Araport" id="AT4G00680"/>
<dbReference type="TAIR" id="AT4G00680">
    <property type="gene designation" value="ADF8"/>
</dbReference>
<dbReference type="eggNOG" id="KOG1735">
    <property type="taxonomic scope" value="Eukaryota"/>
</dbReference>
<dbReference type="HOGENOM" id="CLU_094004_2_2_1"/>
<dbReference type="InParanoid" id="Q570Y6"/>
<dbReference type="OMA" id="MCIAKAN"/>
<dbReference type="OrthoDB" id="10249245at2759"/>
<dbReference type="PhylomeDB" id="Q570Y6"/>
<dbReference type="PRO" id="PR:Q570Y6"/>
<dbReference type="Proteomes" id="UP000006548">
    <property type="component" value="Chromosome 4"/>
</dbReference>
<dbReference type="ExpressionAtlas" id="Q570Y6">
    <property type="expression patterns" value="baseline and differential"/>
</dbReference>
<dbReference type="GO" id="GO:0015629">
    <property type="term" value="C:actin cytoskeleton"/>
    <property type="evidence" value="ECO:0007669"/>
    <property type="project" value="InterPro"/>
</dbReference>
<dbReference type="GO" id="GO:0005737">
    <property type="term" value="C:cytoplasm"/>
    <property type="evidence" value="ECO:0007669"/>
    <property type="project" value="UniProtKB-KW"/>
</dbReference>
<dbReference type="GO" id="GO:0003779">
    <property type="term" value="F:actin binding"/>
    <property type="evidence" value="ECO:0007669"/>
    <property type="project" value="UniProtKB-KW"/>
</dbReference>
<dbReference type="GO" id="GO:0030042">
    <property type="term" value="P:actin filament depolymerization"/>
    <property type="evidence" value="ECO:0000314"/>
    <property type="project" value="TAIR"/>
</dbReference>
<dbReference type="CDD" id="cd11286">
    <property type="entry name" value="ADF_cofilin_like"/>
    <property type="match status" value="1"/>
</dbReference>
<dbReference type="FunFam" id="3.40.20.10:FF:000025">
    <property type="entry name" value="Actin-depolymerizing factor 2"/>
    <property type="match status" value="1"/>
</dbReference>
<dbReference type="Gene3D" id="3.40.20.10">
    <property type="entry name" value="Severin"/>
    <property type="match status" value="1"/>
</dbReference>
<dbReference type="InterPro" id="IPR002108">
    <property type="entry name" value="ADF-H"/>
</dbReference>
<dbReference type="InterPro" id="IPR029006">
    <property type="entry name" value="ADF-H/Gelsolin-like_dom_sf"/>
</dbReference>
<dbReference type="InterPro" id="IPR017904">
    <property type="entry name" value="ADF/Cofilin"/>
</dbReference>
<dbReference type="PANTHER" id="PTHR11913">
    <property type="entry name" value="COFILIN-RELATED"/>
    <property type="match status" value="1"/>
</dbReference>
<dbReference type="Pfam" id="PF00241">
    <property type="entry name" value="Cofilin_ADF"/>
    <property type="match status" value="1"/>
</dbReference>
<dbReference type="SMART" id="SM00102">
    <property type="entry name" value="ADF"/>
    <property type="match status" value="1"/>
</dbReference>
<dbReference type="SUPFAM" id="SSF55753">
    <property type="entry name" value="Actin depolymerizing proteins"/>
    <property type="match status" value="1"/>
</dbReference>
<dbReference type="PROSITE" id="PS51263">
    <property type="entry name" value="ADF_H"/>
    <property type="match status" value="1"/>
</dbReference>
<organism>
    <name type="scientific">Arabidopsis thaliana</name>
    <name type="common">Mouse-ear cress</name>
    <dbReference type="NCBI Taxonomy" id="3702"/>
    <lineage>
        <taxon>Eukaryota</taxon>
        <taxon>Viridiplantae</taxon>
        <taxon>Streptophyta</taxon>
        <taxon>Embryophyta</taxon>
        <taxon>Tracheophyta</taxon>
        <taxon>Spermatophyta</taxon>
        <taxon>Magnoliopsida</taxon>
        <taxon>eudicotyledons</taxon>
        <taxon>Gunneridae</taxon>
        <taxon>Pentapetalae</taxon>
        <taxon>rosids</taxon>
        <taxon>malvids</taxon>
        <taxon>Brassicales</taxon>
        <taxon>Brassicaceae</taxon>
        <taxon>Camelineae</taxon>
        <taxon>Arabidopsis</taxon>
    </lineage>
</organism>
<name>ADF8_ARATH</name>
<sequence length="140" mass="16317">MANSASGMHVNDECKIKFLELKAKRTYRFIVFKIDEKAQQVQIEKLGNPEETYDDFTSSIPDDECRYAVYDFDFTTEDNCQKSKIFFIAWSPDTSRVRSKMLYASSKDRFKREMEGIQVELQATDPSEMSLDIIKGRLNL</sequence>
<proteinExistence type="evidence at transcript level"/>
<feature type="chain" id="PRO_0000278100" description="Actin-depolymerizing factor 8">
    <location>
        <begin position="1"/>
        <end position="140"/>
    </location>
</feature>
<feature type="domain" description="ADF-H" evidence="4">
    <location>
        <begin position="7"/>
        <end position="139"/>
    </location>
</feature>
<feature type="modified residue" description="Phosphoserine" evidence="1">
    <location>
        <position position="6"/>
    </location>
</feature>
<accession>Q570Y6</accession>
<accession>O65277</accession>
<accession>Q8LCH3</accession>
<protein>
    <recommendedName>
        <fullName>Actin-depolymerizing factor 8</fullName>
        <shortName>ADF-8</shortName>
        <shortName>AtADF8</shortName>
    </recommendedName>
</protein>
<comment type="function">
    <text evidence="2">Actin-depolymerizing protein. Severs actin filaments (F-actin) and binds to actin monomers.</text>
</comment>
<comment type="subcellular location">
    <subcellularLocation>
        <location evidence="3">Cytoplasm</location>
        <location evidence="3">Cytoskeleton</location>
    </subcellularLocation>
</comment>
<comment type="tissue specificity">
    <text evidence="5">Expressed in the root trichoblast cells and developed root hairs.</text>
</comment>
<comment type="similarity">
    <text evidence="6">Belongs to the actin-binding proteins ADF family.</text>
</comment>
<comment type="sequence caution" evidence="6">
    <conflict type="erroneous gene model prediction">
        <sequence resource="EMBL-CDS" id="AAC13618"/>
    </conflict>
</comment>
<comment type="sequence caution" evidence="6">
    <conflict type="erroneous initiation">
        <sequence resource="EMBL-CDS" id="BAD94827"/>
    </conflict>
</comment>
<comment type="sequence caution" evidence="6">
    <conflict type="erroneous gene model prediction">
        <sequence resource="EMBL-CDS" id="CAB80877"/>
    </conflict>
</comment>
<gene>
    <name type="primary">ADF8</name>
    <name type="ordered locus">At4g00680</name>
    <name type="ORF">F6N23.12</name>
</gene>